<organism>
    <name type="scientific">Aquifex aeolicus (strain VF5)</name>
    <dbReference type="NCBI Taxonomy" id="224324"/>
    <lineage>
        <taxon>Bacteria</taxon>
        <taxon>Pseudomonadati</taxon>
        <taxon>Aquificota</taxon>
        <taxon>Aquificia</taxon>
        <taxon>Aquificales</taxon>
        <taxon>Aquificaceae</taxon>
        <taxon>Aquifex</taxon>
    </lineage>
</organism>
<accession>O66949</accession>
<reference key="1">
    <citation type="journal article" date="1998" name="Nature">
        <title>The complete genome of the hyperthermophilic bacterium Aquifex aeolicus.</title>
        <authorList>
            <person name="Deckert G."/>
            <person name="Warren P.V."/>
            <person name="Gaasterland T."/>
            <person name="Young W.G."/>
            <person name="Lenox A.L."/>
            <person name="Graham D.E."/>
            <person name="Overbeek R."/>
            <person name="Snead M.A."/>
            <person name="Keller M."/>
            <person name="Aujay M."/>
            <person name="Huber R."/>
            <person name="Feldman R.A."/>
            <person name="Short J.M."/>
            <person name="Olsen G.J."/>
            <person name="Swanson R.V."/>
        </authorList>
    </citation>
    <scope>NUCLEOTIDE SEQUENCE [LARGE SCALE GENOMIC DNA]</scope>
    <source>
        <strain>VF5</strain>
    </source>
</reference>
<dbReference type="EC" id="6.3.4.13" evidence="2"/>
<dbReference type="EMBL" id="AE000657">
    <property type="protein sequence ID" value="AAC06907.1"/>
    <property type="molecule type" value="Genomic_DNA"/>
</dbReference>
<dbReference type="PIR" id="B70365">
    <property type="entry name" value="B70365"/>
</dbReference>
<dbReference type="RefSeq" id="NP_213510.1">
    <property type="nucleotide sequence ID" value="NC_000918.1"/>
</dbReference>
<dbReference type="RefSeq" id="WP_010880448.1">
    <property type="nucleotide sequence ID" value="NC_000918.1"/>
</dbReference>
<dbReference type="PDB" id="2YW2">
    <property type="method" value="X-ray"/>
    <property type="resolution" value="1.80 A"/>
    <property type="chains" value="A/B=1-424"/>
</dbReference>
<dbReference type="PDB" id="2YYA">
    <property type="method" value="X-ray"/>
    <property type="resolution" value="2.40 A"/>
    <property type="chains" value="A/B=1-424"/>
</dbReference>
<dbReference type="PDBsum" id="2YW2"/>
<dbReference type="PDBsum" id="2YYA"/>
<dbReference type="SMR" id="O66949"/>
<dbReference type="FunCoup" id="O66949">
    <property type="interactions" value="327"/>
</dbReference>
<dbReference type="STRING" id="224324.aq_742"/>
<dbReference type="EnsemblBacteria" id="AAC06907">
    <property type="protein sequence ID" value="AAC06907"/>
    <property type="gene ID" value="aq_742"/>
</dbReference>
<dbReference type="KEGG" id="aae:aq_742"/>
<dbReference type="PATRIC" id="fig|224324.8.peg.593"/>
<dbReference type="eggNOG" id="COG0151">
    <property type="taxonomic scope" value="Bacteria"/>
</dbReference>
<dbReference type="HOGENOM" id="CLU_027420_3_1_0"/>
<dbReference type="InParanoid" id="O66949"/>
<dbReference type="OrthoDB" id="9807240at2"/>
<dbReference type="BRENDA" id="6.3.4.13">
    <property type="organism ID" value="396"/>
</dbReference>
<dbReference type="UniPathway" id="UPA00074">
    <property type="reaction ID" value="UER00125"/>
</dbReference>
<dbReference type="EvolutionaryTrace" id="O66949"/>
<dbReference type="Proteomes" id="UP000000798">
    <property type="component" value="Chromosome"/>
</dbReference>
<dbReference type="GO" id="GO:0005524">
    <property type="term" value="F:ATP binding"/>
    <property type="evidence" value="ECO:0007669"/>
    <property type="project" value="UniProtKB-KW"/>
</dbReference>
<dbReference type="GO" id="GO:0046872">
    <property type="term" value="F:metal ion binding"/>
    <property type="evidence" value="ECO:0007669"/>
    <property type="project" value="UniProtKB-KW"/>
</dbReference>
<dbReference type="GO" id="GO:0004637">
    <property type="term" value="F:phosphoribosylamine-glycine ligase activity"/>
    <property type="evidence" value="ECO:0007669"/>
    <property type="project" value="UniProtKB-UniRule"/>
</dbReference>
<dbReference type="GO" id="GO:0006189">
    <property type="term" value="P:'de novo' IMP biosynthetic process"/>
    <property type="evidence" value="ECO:0007669"/>
    <property type="project" value="UniProtKB-UniRule"/>
</dbReference>
<dbReference type="GO" id="GO:0009113">
    <property type="term" value="P:purine nucleobase biosynthetic process"/>
    <property type="evidence" value="ECO:0007669"/>
    <property type="project" value="InterPro"/>
</dbReference>
<dbReference type="FunFam" id="3.40.50.20:FF:000006">
    <property type="entry name" value="Phosphoribosylamine--glycine ligase, chloroplastic"/>
    <property type="match status" value="1"/>
</dbReference>
<dbReference type="FunFam" id="3.90.600.10:FF:000001">
    <property type="entry name" value="Trifunctional purine biosynthetic protein adenosine-3"/>
    <property type="match status" value="1"/>
</dbReference>
<dbReference type="Gene3D" id="3.40.50.20">
    <property type="match status" value="1"/>
</dbReference>
<dbReference type="Gene3D" id="3.30.1490.20">
    <property type="entry name" value="ATP-grasp fold, A domain"/>
    <property type="match status" value="1"/>
</dbReference>
<dbReference type="Gene3D" id="3.30.470.20">
    <property type="entry name" value="ATP-grasp fold, B domain"/>
    <property type="match status" value="1"/>
</dbReference>
<dbReference type="Gene3D" id="3.90.600.10">
    <property type="entry name" value="Phosphoribosylglycinamide synthetase, C-terminal domain"/>
    <property type="match status" value="1"/>
</dbReference>
<dbReference type="HAMAP" id="MF_00138">
    <property type="entry name" value="GARS"/>
    <property type="match status" value="1"/>
</dbReference>
<dbReference type="InterPro" id="IPR011761">
    <property type="entry name" value="ATP-grasp"/>
</dbReference>
<dbReference type="InterPro" id="IPR013815">
    <property type="entry name" value="ATP_grasp_subdomain_1"/>
</dbReference>
<dbReference type="InterPro" id="IPR016185">
    <property type="entry name" value="PreATP-grasp_dom_sf"/>
</dbReference>
<dbReference type="InterPro" id="IPR020561">
    <property type="entry name" value="PRibGlycinamid_synth_ATP-grasp"/>
</dbReference>
<dbReference type="InterPro" id="IPR000115">
    <property type="entry name" value="PRibGlycinamide_synth"/>
</dbReference>
<dbReference type="InterPro" id="IPR020560">
    <property type="entry name" value="PRibGlycinamide_synth_C-dom"/>
</dbReference>
<dbReference type="InterPro" id="IPR037123">
    <property type="entry name" value="PRibGlycinamide_synth_C_sf"/>
</dbReference>
<dbReference type="InterPro" id="IPR020559">
    <property type="entry name" value="PRibGlycinamide_synth_CS"/>
</dbReference>
<dbReference type="InterPro" id="IPR020562">
    <property type="entry name" value="PRibGlycinamide_synth_N"/>
</dbReference>
<dbReference type="InterPro" id="IPR011054">
    <property type="entry name" value="Rudment_hybrid_motif"/>
</dbReference>
<dbReference type="NCBIfam" id="TIGR00877">
    <property type="entry name" value="purD"/>
    <property type="match status" value="1"/>
</dbReference>
<dbReference type="PANTHER" id="PTHR43472">
    <property type="entry name" value="PHOSPHORIBOSYLAMINE--GLYCINE LIGASE"/>
    <property type="match status" value="1"/>
</dbReference>
<dbReference type="PANTHER" id="PTHR43472:SF1">
    <property type="entry name" value="PHOSPHORIBOSYLAMINE--GLYCINE LIGASE, CHLOROPLASTIC"/>
    <property type="match status" value="1"/>
</dbReference>
<dbReference type="Pfam" id="PF01071">
    <property type="entry name" value="GARS_A"/>
    <property type="match status" value="1"/>
</dbReference>
<dbReference type="Pfam" id="PF02843">
    <property type="entry name" value="GARS_C"/>
    <property type="match status" value="1"/>
</dbReference>
<dbReference type="Pfam" id="PF02844">
    <property type="entry name" value="GARS_N"/>
    <property type="match status" value="1"/>
</dbReference>
<dbReference type="SMART" id="SM01209">
    <property type="entry name" value="GARS_A"/>
    <property type="match status" value="1"/>
</dbReference>
<dbReference type="SMART" id="SM01210">
    <property type="entry name" value="GARS_C"/>
    <property type="match status" value="1"/>
</dbReference>
<dbReference type="SUPFAM" id="SSF56059">
    <property type="entry name" value="Glutathione synthetase ATP-binding domain-like"/>
    <property type="match status" value="1"/>
</dbReference>
<dbReference type="SUPFAM" id="SSF52440">
    <property type="entry name" value="PreATP-grasp domain"/>
    <property type="match status" value="1"/>
</dbReference>
<dbReference type="SUPFAM" id="SSF51246">
    <property type="entry name" value="Rudiment single hybrid motif"/>
    <property type="match status" value="1"/>
</dbReference>
<dbReference type="PROSITE" id="PS50975">
    <property type="entry name" value="ATP_GRASP"/>
    <property type="match status" value="1"/>
</dbReference>
<dbReference type="PROSITE" id="PS00184">
    <property type="entry name" value="GARS"/>
    <property type="match status" value="1"/>
</dbReference>
<sequence length="424" mass="47430">MKVLVVGNGGREHAIAWKVAQSPLVKELYVAKGNAGIWEIAKRVDISPTDVEKLAEFAKNEGVDFTIVGPEAPLVEGIVDEFEKRGLKIFGPNKEAAKLEGSKAFAKTFMKKYGIPTARYEVFTDFEKAKEYVEKVGAPIVVKADGLAAGKGAVVCETVEKAIETLDRFLNKKIFGKSSERVVIEEFLEGEEASYIVMINGDRYVPLPTSQDHKRLLDEDKGPNTGGMGAYSPTPVINEEVEKRIREEIVERVIKGLKEEGIYYRGFLYAGLMITKEGPKVLEFNVRLGDPEAQPILMRVKNDFLETLLNFYEGKDVHIKEDERYALDVVLASRGYPEKPETGKIIHGLDYLKSMEDVVVFHAGTKKEGNFTVTSGGRVLNVCAYGKTLKEAKERAYEAIRYVCFEGMHYRKDIGDKAFKYLSE</sequence>
<name>PUR2_AQUAE</name>
<gene>
    <name evidence="2" type="primary">purD</name>
    <name type="ordered locus">aq_742</name>
</gene>
<evidence type="ECO:0000250" key="1"/>
<evidence type="ECO:0000255" key="2">
    <source>
        <dbReference type="HAMAP-Rule" id="MF_00138"/>
    </source>
</evidence>
<evidence type="ECO:0007829" key="3">
    <source>
        <dbReference type="PDB" id="2YW2"/>
    </source>
</evidence>
<keyword id="KW-0002">3D-structure</keyword>
<keyword id="KW-0067">ATP-binding</keyword>
<keyword id="KW-0436">Ligase</keyword>
<keyword id="KW-0460">Magnesium</keyword>
<keyword id="KW-0464">Manganese</keyword>
<keyword id="KW-0479">Metal-binding</keyword>
<keyword id="KW-0547">Nucleotide-binding</keyword>
<keyword id="KW-0658">Purine biosynthesis</keyword>
<keyword id="KW-1185">Reference proteome</keyword>
<comment type="catalytic activity">
    <reaction evidence="2">
        <text>5-phospho-beta-D-ribosylamine + glycine + ATP = N(1)-(5-phospho-beta-D-ribosyl)glycinamide + ADP + phosphate + H(+)</text>
        <dbReference type="Rhea" id="RHEA:17453"/>
        <dbReference type="ChEBI" id="CHEBI:15378"/>
        <dbReference type="ChEBI" id="CHEBI:30616"/>
        <dbReference type="ChEBI" id="CHEBI:43474"/>
        <dbReference type="ChEBI" id="CHEBI:57305"/>
        <dbReference type="ChEBI" id="CHEBI:58681"/>
        <dbReference type="ChEBI" id="CHEBI:143788"/>
        <dbReference type="ChEBI" id="CHEBI:456216"/>
        <dbReference type="EC" id="6.3.4.13"/>
    </reaction>
</comment>
<comment type="cofactor">
    <cofactor evidence="1">
        <name>Mg(2+)</name>
        <dbReference type="ChEBI" id="CHEBI:18420"/>
    </cofactor>
    <cofactor evidence="1">
        <name>Mn(2+)</name>
        <dbReference type="ChEBI" id="CHEBI:29035"/>
    </cofactor>
    <text evidence="1">Binds 1 Mg(2+) or Mn(2+) ion per subunit.</text>
</comment>
<comment type="pathway">
    <text evidence="2">Purine metabolism; IMP biosynthesis via de novo pathway; N(1)-(5-phospho-D-ribosyl)glycinamide from 5-phospho-alpha-D-ribose 1-diphosphate: step 2/2.</text>
</comment>
<comment type="similarity">
    <text evidence="2">Belongs to the GARS family.</text>
</comment>
<proteinExistence type="evidence at protein level"/>
<protein>
    <recommendedName>
        <fullName evidence="2">Phosphoribosylamine--glycine ligase</fullName>
        <ecNumber evidence="2">6.3.4.13</ecNumber>
    </recommendedName>
    <alternativeName>
        <fullName evidence="2">GARS</fullName>
    </alternativeName>
    <alternativeName>
        <fullName evidence="2">Glycinamide ribonucleotide synthetase</fullName>
    </alternativeName>
    <alternativeName>
        <fullName evidence="2">Phosphoribosylglycinamide synthetase</fullName>
    </alternativeName>
</protein>
<feature type="chain" id="PRO_0000151434" description="Phosphoribosylamine--glycine ligase">
    <location>
        <begin position="1"/>
        <end position="424"/>
    </location>
</feature>
<feature type="domain" description="ATP-grasp" evidence="2">
    <location>
        <begin position="107"/>
        <end position="313"/>
    </location>
</feature>
<feature type="binding site" evidence="2">
    <location>
        <begin position="133"/>
        <end position="194"/>
    </location>
    <ligand>
        <name>ATP</name>
        <dbReference type="ChEBI" id="CHEBI:30616"/>
    </ligand>
</feature>
<feature type="binding site" evidence="2">
    <location>
        <position position="283"/>
    </location>
    <ligand>
        <name>Mg(2+)</name>
        <dbReference type="ChEBI" id="CHEBI:18420"/>
    </ligand>
</feature>
<feature type="binding site" evidence="2">
    <location>
        <position position="285"/>
    </location>
    <ligand>
        <name>Mg(2+)</name>
        <dbReference type="ChEBI" id="CHEBI:18420"/>
    </ligand>
</feature>
<feature type="strand" evidence="3">
    <location>
        <begin position="2"/>
        <end position="9"/>
    </location>
</feature>
<feature type="helix" evidence="3">
    <location>
        <begin position="10"/>
        <end position="19"/>
    </location>
</feature>
<feature type="strand" evidence="3">
    <location>
        <begin position="26"/>
        <end position="32"/>
    </location>
</feature>
<feature type="helix" evidence="3">
    <location>
        <begin position="37"/>
        <end position="39"/>
    </location>
</feature>
<feature type="strand" evidence="3">
    <location>
        <begin position="41"/>
        <end position="44"/>
    </location>
</feature>
<feature type="helix" evidence="3">
    <location>
        <begin position="51"/>
        <end position="61"/>
    </location>
</feature>
<feature type="strand" evidence="3">
    <location>
        <begin position="64"/>
        <end position="68"/>
    </location>
</feature>
<feature type="helix" evidence="3">
    <location>
        <begin position="71"/>
        <end position="75"/>
    </location>
</feature>
<feature type="helix" evidence="3">
    <location>
        <begin position="78"/>
        <end position="84"/>
    </location>
</feature>
<feature type="strand" evidence="3">
    <location>
        <begin position="89"/>
        <end position="91"/>
    </location>
</feature>
<feature type="turn" evidence="3">
    <location>
        <begin position="94"/>
        <end position="97"/>
    </location>
</feature>
<feature type="helix" evidence="3">
    <location>
        <begin position="98"/>
        <end position="101"/>
    </location>
</feature>
<feature type="helix" evidence="3">
    <location>
        <begin position="103"/>
        <end position="112"/>
    </location>
</feature>
<feature type="strand" evidence="3">
    <location>
        <begin position="120"/>
        <end position="124"/>
    </location>
</feature>
<feature type="helix" evidence="3">
    <location>
        <begin position="126"/>
        <end position="136"/>
    </location>
</feature>
<feature type="strand" evidence="3">
    <location>
        <begin position="138"/>
        <end position="146"/>
    </location>
</feature>
<feature type="strand" evidence="3">
    <location>
        <begin position="152"/>
        <end position="158"/>
    </location>
</feature>
<feature type="helix" evidence="3">
    <location>
        <begin position="159"/>
        <end position="170"/>
    </location>
</feature>
<feature type="helix" evidence="3">
    <location>
        <begin position="176"/>
        <end position="179"/>
    </location>
</feature>
<feature type="strand" evidence="3">
    <location>
        <begin position="180"/>
        <end position="186"/>
    </location>
</feature>
<feature type="strand" evidence="3">
    <location>
        <begin position="190"/>
        <end position="200"/>
    </location>
</feature>
<feature type="strand" evidence="3">
    <location>
        <begin position="203"/>
        <end position="206"/>
    </location>
</feature>
<feature type="strand" evidence="3">
    <location>
        <begin position="210"/>
        <end position="212"/>
    </location>
</feature>
<feature type="strand" evidence="3">
    <location>
        <begin position="215"/>
        <end position="217"/>
    </location>
</feature>
<feature type="turn" evidence="3">
    <location>
        <begin position="218"/>
        <end position="220"/>
    </location>
</feature>
<feature type="strand" evidence="3">
    <location>
        <begin position="221"/>
        <end position="224"/>
    </location>
</feature>
<feature type="strand" evidence="3">
    <location>
        <begin position="228"/>
        <end position="233"/>
    </location>
</feature>
<feature type="helix" evidence="3">
    <location>
        <begin position="239"/>
        <end position="248"/>
    </location>
</feature>
<feature type="helix" evidence="3">
    <location>
        <begin position="250"/>
        <end position="260"/>
    </location>
</feature>
<feature type="strand" evidence="3">
    <location>
        <begin position="265"/>
        <end position="275"/>
    </location>
</feature>
<feature type="strand" evidence="3">
    <location>
        <begin position="278"/>
        <end position="287"/>
    </location>
</feature>
<feature type="turn" evidence="3">
    <location>
        <begin position="290"/>
        <end position="292"/>
    </location>
</feature>
<feature type="helix" evidence="3">
    <location>
        <begin position="293"/>
        <end position="298"/>
    </location>
</feature>
<feature type="helix" evidence="3">
    <location>
        <begin position="304"/>
        <end position="312"/>
    </location>
</feature>
<feature type="strand" evidence="3">
    <location>
        <begin position="323"/>
        <end position="332"/>
    </location>
</feature>
<feature type="turn" evidence="3">
    <location>
        <begin position="334"/>
        <end position="337"/>
    </location>
</feature>
<feature type="helix" evidence="3">
    <location>
        <begin position="349"/>
        <end position="353"/>
    </location>
</feature>
<feature type="strand" evidence="3">
    <location>
        <begin position="358"/>
        <end position="368"/>
    </location>
</feature>
<feature type="strand" evidence="3">
    <location>
        <begin position="371"/>
        <end position="374"/>
    </location>
</feature>
<feature type="strand" evidence="3">
    <location>
        <begin position="376"/>
        <end position="388"/>
    </location>
</feature>
<feature type="helix" evidence="3">
    <location>
        <begin position="389"/>
        <end position="400"/>
    </location>
</feature>
<feature type="turn" evidence="3">
    <location>
        <begin position="414"/>
        <end position="418"/>
    </location>
</feature>
<feature type="helix" evidence="3">
    <location>
        <begin position="419"/>
        <end position="421"/>
    </location>
</feature>